<comment type="function">
    <text evidence="1">Catalyzes the reversible phosphorylation of UMP to UDP.</text>
</comment>
<comment type="catalytic activity">
    <reaction evidence="1">
        <text>UMP + ATP = UDP + ADP</text>
        <dbReference type="Rhea" id="RHEA:24400"/>
        <dbReference type="ChEBI" id="CHEBI:30616"/>
        <dbReference type="ChEBI" id="CHEBI:57865"/>
        <dbReference type="ChEBI" id="CHEBI:58223"/>
        <dbReference type="ChEBI" id="CHEBI:456216"/>
        <dbReference type="EC" id="2.7.4.22"/>
    </reaction>
</comment>
<comment type="activity regulation">
    <text evidence="1">Inhibited by UTP.</text>
</comment>
<comment type="pathway">
    <text evidence="1">Pyrimidine metabolism; CTP biosynthesis via de novo pathway; UDP from UMP (UMPK route): step 1/1.</text>
</comment>
<comment type="subunit">
    <text evidence="1">Homohexamer.</text>
</comment>
<comment type="subcellular location">
    <subcellularLocation>
        <location evidence="1">Cytoplasm</location>
    </subcellularLocation>
</comment>
<comment type="similarity">
    <text evidence="1">Belongs to the UMP kinase family.</text>
</comment>
<proteinExistence type="inferred from homology"/>
<name>PYRH_PARD8</name>
<sequence>MAQYKRILLKLSGESLMGGKQYGIDEVRLNEYAAQIKEIAEMGVQIGIVIGGGNIFRGLSGASKGFDRVKGDQMGMLATVINSLALSSALVAQGVNAKVLTAIRMEPIGEFYNKWRAIELLEQGNVVIMSGGTGNPFFTTDTGSSLRGIEIEADVMLKGTRVDGIYTADPEKDPTATKFSDITYDEIYTRGLKVMDLTATTMCKENNLPIIVFDMDTNGNLKKVMSGENIGTLVHN</sequence>
<organism>
    <name type="scientific">Parabacteroides distasonis (strain ATCC 8503 / DSM 20701 / CIP 104284 / JCM 5825 / NCTC 11152)</name>
    <dbReference type="NCBI Taxonomy" id="435591"/>
    <lineage>
        <taxon>Bacteria</taxon>
        <taxon>Pseudomonadati</taxon>
        <taxon>Bacteroidota</taxon>
        <taxon>Bacteroidia</taxon>
        <taxon>Bacteroidales</taxon>
        <taxon>Tannerellaceae</taxon>
        <taxon>Parabacteroides</taxon>
    </lineage>
</organism>
<dbReference type="EC" id="2.7.4.22" evidence="1"/>
<dbReference type="EMBL" id="CP000140">
    <property type="protein sequence ID" value="ABR45074.1"/>
    <property type="molecule type" value="Genomic_DNA"/>
</dbReference>
<dbReference type="RefSeq" id="WP_005859761.1">
    <property type="nucleotide sequence ID" value="NZ_LR215978.1"/>
</dbReference>
<dbReference type="SMR" id="A6LHB0"/>
<dbReference type="STRING" id="435591.BDI_3371"/>
<dbReference type="PaxDb" id="435591-BDI_3371"/>
<dbReference type="KEGG" id="pdi:BDI_3371"/>
<dbReference type="eggNOG" id="COG0528">
    <property type="taxonomic scope" value="Bacteria"/>
</dbReference>
<dbReference type="HOGENOM" id="CLU_033861_0_0_10"/>
<dbReference type="BioCyc" id="PDIS435591:G1G5A-3461-MONOMER"/>
<dbReference type="UniPathway" id="UPA00159">
    <property type="reaction ID" value="UER00275"/>
</dbReference>
<dbReference type="Proteomes" id="UP000000566">
    <property type="component" value="Chromosome"/>
</dbReference>
<dbReference type="GO" id="GO:0005737">
    <property type="term" value="C:cytoplasm"/>
    <property type="evidence" value="ECO:0007669"/>
    <property type="project" value="UniProtKB-SubCell"/>
</dbReference>
<dbReference type="GO" id="GO:0005524">
    <property type="term" value="F:ATP binding"/>
    <property type="evidence" value="ECO:0007669"/>
    <property type="project" value="UniProtKB-KW"/>
</dbReference>
<dbReference type="GO" id="GO:0033862">
    <property type="term" value="F:UMP kinase activity"/>
    <property type="evidence" value="ECO:0007669"/>
    <property type="project" value="UniProtKB-EC"/>
</dbReference>
<dbReference type="GO" id="GO:0044210">
    <property type="term" value="P:'de novo' CTP biosynthetic process"/>
    <property type="evidence" value="ECO:0007669"/>
    <property type="project" value="UniProtKB-UniRule"/>
</dbReference>
<dbReference type="GO" id="GO:0006225">
    <property type="term" value="P:UDP biosynthetic process"/>
    <property type="evidence" value="ECO:0007669"/>
    <property type="project" value="TreeGrafter"/>
</dbReference>
<dbReference type="CDD" id="cd04254">
    <property type="entry name" value="AAK_UMPK-PyrH-Ec"/>
    <property type="match status" value="1"/>
</dbReference>
<dbReference type="FunFam" id="3.40.1160.10:FF:000001">
    <property type="entry name" value="Uridylate kinase"/>
    <property type="match status" value="1"/>
</dbReference>
<dbReference type="Gene3D" id="3.40.1160.10">
    <property type="entry name" value="Acetylglutamate kinase-like"/>
    <property type="match status" value="1"/>
</dbReference>
<dbReference type="HAMAP" id="MF_01220_B">
    <property type="entry name" value="PyrH_B"/>
    <property type="match status" value="1"/>
</dbReference>
<dbReference type="InterPro" id="IPR036393">
    <property type="entry name" value="AceGlu_kinase-like_sf"/>
</dbReference>
<dbReference type="InterPro" id="IPR001048">
    <property type="entry name" value="Asp/Glu/Uridylate_kinase"/>
</dbReference>
<dbReference type="InterPro" id="IPR011817">
    <property type="entry name" value="Uridylate_kinase"/>
</dbReference>
<dbReference type="InterPro" id="IPR015963">
    <property type="entry name" value="Uridylate_kinase_bac"/>
</dbReference>
<dbReference type="NCBIfam" id="TIGR02075">
    <property type="entry name" value="pyrH_bact"/>
    <property type="match status" value="1"/>
</dbReference>
<dbReference type="PANTHER" id="PTHR42833">
    <property type="entry name" value="URIDYLATE KINASE"/>
    <property type="match status" value="1"/>
</dbReference>
<dbReference type="PANTHER" id="PTHR42833:SF4">
    <property type="entry name" value="URIDYLATE KINASE PUMPKIN, CHLOROPLASTIC"/>
    <property type="match status" value="1"/>
</dbReference>
<dbReference type="Pfam" id="PF00696">
    <property type="entry name" value="AA_kinase"/>
    <property type="match status" value="1"/>
</dbReference>
<dbReference type="PIRSF" id="PIRSF005650">
    <property type="entry name" value="Uridylate_kin"/>
    <property type="match status" value="1"/>
</dbReference>
<dbReference type="SUPFAM" id="SSF53633">
    <property type="entry name" value="Carbamate kinase-like"/>
    <property type="match status" value="1"/>
</dbReference>
<reference key="1">
    <citation type="journal article" date="2007" name="PLoS Biol.">
        <title>Evolution of symbiotic bacteria in the distal human intestine.</title>
        <authorList>
            <person name="Xu J."/>
            <person name="Mahowald M.A."/>
            <person name="Ley R.E."/>
            <person name="Lozupone C.A."/>
            <person name="Hamady M."/>
            <person name="Martens E.C."/>
            <person name="Henrissat B."/>
            <person name="Coutinho P.M."/>
            <person name="Minx P."/>
            <person name="Latreille P."/>
            <person name="Cordum H."/>
            <person name="Van Brunt A."/>
            <person name="Kim K."/>
            <person name="Fulton R.S."/>
            <person name="Fulton L.A."/>
            <person name="Clifton S.W."/>
            <person name="Wilson R.K."/>
            <person name="Knight R.D."/>
            <person name="Gordon J.I."/>
        </authorList>
    </citation>
    <scope>NUCLEOTIDE SEQUENCE [LARGE SCALE GENOMIC DNA]</scope>
    <source>
        <strain>ATCC 8503 / DSM 20701 / CIP 104284 / JCM 5825 / NCTC 11152</strain>
    </source>
</reference>
<evidence type="ECO:0000255" key="1">
    <source>
        <dbReference type="HAMAP-Rule" id="MF_01220"/>
    </source>
</evidence>
<protein>
    <recommendedName>
        <fullName evidence="1">Uridylate kinase</fullName>
        <shortName evidence="1">UK</shortName>
        <ecNumber evidence="1">2.7.4.22</ecNumber>
    </recommendedName>
    <alternativeName>
        <fullName evidence="1">Uridine monophosphate kinase</fullName>
        <shortName evidence="1">UMP kinase</shortName>
        <shortName evidence="1">UMPK</shortName>
    </alternativeName>
</protein>
<keyword id="KW-0067">ATP-binding</keyword>
<keyword id="KW-0963">Cytoplasm</keyword>
<keyword id="KW-0418">Kinase</keyword>
<keyword id="KW-0547">Nucleotide-binding</keyword>
<keyword id="KW-0665">Pyrimidine biosynthesis</keyword>
<keyword id="KW-1185">Reference proteome</keyword>
<keyword id="KW-0808">Transferase</keyword>
<feature type="chain" id="PRO_1000053971" description="Uridylate kinase">
    <location>
        <begin position="1"/>
        <end position="236"/>
    </location>
</feature>
<feature type="binding site" evidence="1">
    <location>
        <begin position="10"/>
        <end position="13"/>
    </location>
    <ligand>
        <name>ATP</name>
        <dbReference type="ChEBI" id="CHEBI:30616"/>
    </ligand>
</feature>
<feature type="binding site" evidence="1">
    <location>
        <position position="52"/>
    </location>
    <ligand>
        <name>UMP</name>
        <dbReference type="ChEBI" id="CHEBI:57865"/>
    </ligand>
</feature>
<feature type="binding site" evidence="1">
    <location>
        <position position="53"/>
    </location>
    <ligand>
        <name>ATP</name>
        <dbReference type="ChEBI" id="CHEBI:30616"/>
    </ligand>
</feature>
<feature type="binding site" evidence="1">
    <location>
        <position position="57"/>
    </location>
    <ligand>
        <name>ATP</name>
        <dbReference type="ChEBI" id="CHEBI:30616"/>
    </ligand>
</feature>
<feature type="binding site" evidence="1">
    <location>
        <position position="72"/>
    </location>
    <ligand>
        <name>UMP</name>
        <dbReference type="ChEBI" id="CHEBI:57865"/>
    </ligand>
</feature>
<feature type="binding site" evidence="1">
    <location>
        <begin position="133"/>
        <end position="140"/>
    </location>
    <ligand>
        <name>UMP</name>
        <dbReference type="ChEBI" id="CHEBI:57865"/>
    </ligand>
</feature>
<feature type="binding site" evidence="1">
    <location>
        <position position="160"/>
    </location>
    <ligand>
        <name>ATP</name>
        <dbReference type="ChEBI" id="CHEBI:30616"/>
    </ligand>
</feature>
<feature type="binding site" evidence="1">
    <location>
        <position position="166"/>
    </location>
    <ligand>
        <name>ATP</name>
        <dbReference type="ChEBI" id="CHEBI:30616"/>
    </ligand>
</feature>
<feature type="binding site" evidence="1">
    <location>
        <position position="169"/>
    </location>
    <ligand>
        <name>ATP</name>
        <dbReference type="ChEBI" id="CHEBI:30616"/>
    </ligand>
</feature>
<gene>
    <name evidence="1" type="primary">pyrH</name>
    <name type="ordered locus">BDI_3371</name>
</gene>
<accession>A6LHB0</accession>